<proteinExistence type="inferred from homology"/>
<organism>
    <name type="scientific">Carassius auratus</name>
    <name type="common">Goldfish</name>
    <dbReference type="NCBI Taxonomy" id="7957"/>
    <lineage>
        <taxon>Eukaryota</taxon>
        <taxon>Metazoa</taxon>
        <taxon>Chordata</taxon>
        <taxon>Craniata</taxon>
        <taxon>Vertebrata</taxon>
        <taxon>Euteleostomi</taxon>
        <taxon>Actinopterygii</taxon>
        <taxon>Neopterygii</taxon>
        <taxon>Teleostei</taxon>
        <taxon>Ostariophysi</taxon>
        <taxon>Cypriniformes</taxon>
        <taxon>Cyprinidae</taxon>
        <taxon>Cyprininae</taxon>
        <taxon>Carassius</taxon>
    </lineage>
</organism>
<evidence type="ECO:0000250" key="1">
    <source>
        <dbReference type="UniProtKB" id="P00395"/>
    </source>
</evidence>
<evidence type="ECO:0000250" key="2">
    <source>
        <dbReference type="UniProtKB" id="P00396"/>
    </source>
</evidence>
<evidence type="ECO:0000250" key="3">
    <source>
        <dbReference type="UniProtKB" id="P00401"/>
    </source>
</evidence>
<evidence type="ECO:0000305" key="4"/>
<protein>
    <recommendedName>
        <fullName>Cytochrome c oxidase subunit 1</fullName>
        <ecNumber>7.1.1.9</ecNumber>
    </recommendedName>
    <alternativeName>
        <fullName>Cytochrome c oxidase polypeptide I</fullName>
    </alternativeName>
</protein>
<gene>
    <name type="primary">mt-co1</name>
    <name type="synonym">coi</name>
    <name type="synonym">coxi</name>
    <name type="synonym">mtco1</name>
</gene>
<dbReference type="EC" id="7.1.1.9"/>
<dbReference type="EMBL" id="AB006953">
    <property type="protein sequence ID" value="BAA31240.1"/>
    <property type="molecule type" value="Genomic_DNA"/>
</dbReference>
<dbReference type="EMBL" id="AB045144">
    <property type="protein sequence ID" value="BAB40350.1"/>
    <property type="molecule type" value="Genomic_DNA"/>
</dbReference>
<dbReference type="SMR" id="O78681"/>
<dbReference type="CTD" id="4512"/>
<dbReference type="OrthoDB" id="10002679at2759"/>
<dbReference type="UniPathway" id="UPA00705"/>
<dbReference type="Proteomes" id="UP000515129">
    <property type="component" value="Mitochondrion MT"/>
</dbReference>
<dbReference type="GO" id="GO:0005743">
    <property type="term" value="C:mitochondrial inner membrane"/>
    <property type="evidence" value="ECO:0007669"/>
    <property type="project" value="UniProtKB-SubCell"/>
</dbReference>
<dbReference type="GO" id="GO:0045277">
    <property type="term" value="C:respiratory chain complex IV"/>
    <property type="evidence" value="ECO:0000250"/>
    <property type="project" value="UniProtKB"/>
</dbReference>
<dbReference type="GO" id="GO:0004129">
    <property type="term" value="F:cytochrome-c oxidase activity"/>
    <property type="evidence" value="ECO:0007669"/>
    <property type="project" value="UniProtKB-EC"/>
</dbReference>
<dbReference type="GO" id="GO:0020037">
    <property type="term" value="F:heme binding"/>
    <property type="evidence" value="ECO:0007669"/>
    <property type="project" value="InterPro"/>
</dbReference>
<dbReference type="GO" id="GO:0046872">
    <property type="term" value="F:metal ion binding"/>
    <property type="evidence" value="ECO:0007669"/>
    <property type="project" value="UniProtKB-KW"/>
</dbReference>
<dbReference type="GO" id="GO:0015990">
    <property type="term" value="P:electron transport coupled proton transport"/>
    <property type="evidence" value="ECO:0007669"/>
    <property type="project" value="TreeGrafter"/>
</dbReference>
<dbReference type="GO" id="GO:0006123">
    <property type="term" value="P:mitochondrial electron transport, cytochrome c to oxygen"/>
    <property type="evidence" value="ECO:0007669"/>
    <property type="project" value="TreeGrafter"/>
</dbReference>
<dbReference type="GO" id="GO:0046686">
    <property type="term" value="P:response to cadmium ion"/>
    <property type="evidence" value="ECO:0007669"/>
    <property type="project" value="Ensembl"/>
</dbReference>
<dbReference type="GO" id="GO:0051597">
    <property type="term" value="P:response to methylmercury"/>
    <property type="evidence" value="ECO:0007669"/>
    <property type="project" value="Ensembl"/>
</dbReference>
<dbReference type="CDD" id="cd01663">
    <property type="entry name" value="Cyt_c_Oxidase_I"/>
    <property type="match status" value="1"/>
</dbReference>
<dbReference type="FunFam" id="1.20.210.10:FF:000001">
    <property type="entry name" value="Cytochrome c oxidase subunit 1"/>
    <property type="match status" value="1"/>
</dbReference>
<dbReference type="Gene3D" id="1.20.210.10">
    <property type="entry name" value="Cytochrome c oxidase-like, subunit I domain"/>
    <property type="match status" value="1"/>
</dbReference>
<dbReference type="InterPro" id="IPR023616">
    <property type="entry name" value="Cyt_c_oxase-like_su1_dom"/>
</dbReference>
<dbReference type="InterPro" id="IPR036927">
    <property type="entry name" value="Cyt_c_oxase-like_su1_sf"/>
</dbReference>
<dbReference type="InterPro" id="IPR000883">
    <property type="entry name" value="Cyt_C_Oxase_1"/>
</dbReference>
<dbReference type="InterPro" id="IPR023615">
    <property type="entry name" value="Cyt_c_Oxase_su1_BS"/>
</dbReference>
<dbReference type="InterPro" id="IPR033944">
    <property type="entry name" value="Cyt_c_oxase_su1_dom"/>
</dbReference>
<dbReference type="PANTHER" id="PTHR10422">
    <property type="entry name" value="CYTOCHROME C OXIDASE SUBUNIT 1"/>
    <property type="match status" value="1"/>
</dbReference>
<dbReference type="PANTHER" id="PTHR10422:SF18">
    <property type="entry name" value="CYTOCHROME C OXIDASE SUBUNIT 1"/>
    <property type="match status" value="1"/>
</dbReference>
<dbReference type="Pfam" id="PF00115">
    <property type="entry name" value="COX1"/>
    <property type="match status" value="1"/>
</dbReference>
<dbReference type="PRINTS" id="PR01165">
    <property type="entry name" value="CYCOXIDASEI"/>
</dbReference>
<dbReference type="SUPFAM" id="SSF81442">
    <property type="entry name" value="Cytochrome c oxidase subunit I-like"/>
    <property type="match status" value="1"/>
</dbReference>
<dbReference type="PROSITE" id="PS50855">
    <property type="entry name" value="COX1"/>
    <property type="match status" value="1"/>
</dbReference>
<dbReference type="PROSITE" id="PS00077">
    <property type="entry name" value="COX1_CUB"/>
    <property type="match status" value="1"/>
</dbReference>
<geneLocation type="mitochondrion"/>
<name>COX1_CARAU</name>
<keyword id="KW-0106">Calcium</keyword>
<keyword id="KW-0186">Copper</keyword>
<keyword id="KW-0249">Electron transport</keyword>
<keyword id="KW-0349">Heme</keyword>
<keyword id="KW-0408">Iron</keyword>
<keyword id="KW-0460">Magnesium</keyword>
<keyword id="KW-0472">Membrane</keyword>
<keyword id="KW-0479">Metal-binding</keyword>
<keyword id="KW-0496">Mitochondrion</keyword>
<keyword id="KW-0999">Mitochondrion inner membrane</keyword>
<keyword id="KW-1185">Reference proteome</keyword>
<keyword id="KW-0679">Respiratory chain</keyword>
<keyword id="KW-0915">Sodium</keyword>
<keyword id="KW-1278">Translocase</keyword>
<keyword id="KW-0812">Transmembrane</keyword>
<keyword id="KW-1133">Transmembrane helix</keyword>
<keyword id="KW-0813">Transport</keyword>
<comment type="function">
    <text evidence="3">Component of the cytochrome c oxidase, the last enzyme in the mitochondrial electron transport chain which drives oxidative phosphorylation. The respiratory chain contains 3 multisubunit complexes succinate dehydrogenase (complex II, CII), ubiquinol-cytochrome c oxidoreductase (cytochrome b-c1 complex, complex III, CIII) and cytochrome c oxidase (complex IV, CIV), that cooperate to transfer electrons derived from NADH and succinate to molecular oxygen, creating an electrochemical gradient over the inner membrane that drives transmembrane transport and the ATP synthase. Cytochrome c oxidase is the component of the respiratory chain that catalyzes the reduction of oxygen to water. Electrons originating from reduced cytochrome c in the intermembrane space (IMS) are transferred via the dinuclear copper A center (CU(A)) of subunit 2 and heme A of subunit 1 to the active site in subunit 1, a binuclear center (BNC) formed by heme A3 and copper B (CU(B)). The BNC reduces molecular oxygen to 2 water molecules using 4 electrons from cytochrome c in the IMS and 4 protons from the mitochondrial matrix.</text>
</comment>
<comment type="catalytic activity">
    <reaction evidence="3">
        <text>4 Fe(II)-[cytochrome c] + O2 + 8 H(+)(in) = 4 Fe(III)-[cytochrome c] + 2 H2O + 4 H(+)(out)</text>
        <dbReference type="Rhea" id="RHEA:11436"/>
        <dbReference type="Rhea" id="RHEA-COMP:10350"/>
        <dbReference type="Rhea" id="RHEA-COMP:14399"/>
        <dbReference type="ChEBI" id="CHEBI:15377"/>
        <dbReference type="ChEBI" id="CHEBI:15378"/>
        <dbReference type="ChEBI" id="CHEBI:15379"/>
        <dbReference type="ChEBI" id="CHEBI:29033"/>
        <dbReference type="ChEBI" id="CHEBI:29034"/>
        <dbReference type="EC" id="7.1.1.9"/>
    </reaction>
    <physiologicalReaction direction="left-to-right" evidence="3">
        <dbReference type="Rhea" id="RHEA:11437"/>
    </physiologicalReaction>
</comment>
<comment type="cofactor">
    <cofactor evidence="2">
        <name>heme</name>
        <dbReference type="ChEBI" id="CHEBI:30413"/>
    </cofactor>
    <text evidence="2">Binds 2 heme A groups non-covalently per subunit.</text>
</comment>
<comment type="cofactor">
    <cofactor evidence="2">
        <name>Cu cation</name>
        <dbReference type="ChEBI" id="CHEBI:23378"/>
    </cofactor>
    <text evidence="2">Binds a copper B center.</text>
</comment>
<comment type="pathway">
    <text evidence="3">Energy metabolism; oxidative phosphorylation.</text>
</comment>
<comment type="subunit">
    <text evidence="1 2">Component of the cytochrome c oxidase (complex IV, CIV), a multisubunit enzyme composed of 14 subunits. The complex is composed of a catalytic core of 3 subunits MT-CO1, MT-CO2 and MT-CO3, encoded in the mitochondrial DNA, and 11 supernumerary subunits COX4I, COX5A, COX5B, COX6A, COX6B, COX6C, COX7A, COX7B, COX7C, COX8 and NDUFA4, which are encoded in the nuclear genome. The complex exists as a monomer or a dimer and forms supercomplexes (SCs) in the inner mitochondrial membrane with NADH-ubiquinone oxidoreductase (complex I, CI) and ubiquinol-cytochrome c oxidoreductase (cytochrome b-c1 complex, complex III, CIII), resulting in different assemblies (supercomplex SCI(1)III(2)IV(1) and megacomplex MCI(2)III(2)IV(2)) (By similarity). As a newly synthesized protein, rapidly incorporates into a multi-subunit assembly intermediate in the inner membrane, called MITRAC (mitochondrial translation regulation assembly intermediate of cytochrome c oxidase) complex, whose core components are COA3/MITRAC12 and COX14. Within the MITRAC complex, interacts with COA3 and with SMIM20/MITRAC7; the interaction with SMIM20 stabilizes the newly synthesized MT-CO1 and prevents its premature turnover. Interacts with TMEM177 in a COX20-dependent manner (By similarity).</text>
</comment>
<comment type="subcellular location">
    <subcellularLocation>
        <location evidence="2">Mitochondrion inner membrane</location>
        <topology evidence="2">Multi-pass membrane protein</topology>
    </subcellularLocation>
</comment>
<comment type="similarity">
    <text evidence="4">Belongs to the heme-copper respiratory oxidase family.</text>
</comment>
<sequence length="516" mass="56847">MAITRWFFSTNHKDIGTLYLVFGAWAGMVGTALSLLIRAELSQPGSLLGDDQIYNVIVTAHAFVMIFFMVMPILIGGFGNWLVPLMIGAPDMAFPRMNNMSFWLLPPSFLLLLASSGVEAGAGTGWTVYPPLAGNLAHAGASVDLTIFSLHLAGVSSILGAINFITTTINMKPPAISQYQTPLFVWSVLVTAVLLLLSLPVLAAGITMLLTDRNLNTTFFDPAGGGDPILYQHLFWFFGHPEVYILILPGFGIISHVVAYYSGKKEPFGYMGMVWAMMAIGLLGFIVWAHHMFTVGMDVDTRAYFTSATMIIAIPTGVKVFSWLATLHGGSIKWETPMLWALGFIFLFTVGGLTGIVLSNSSLDIVLHDTYYVVAHFHYVLSMGAVFAIMAAFVHWFPLLTGYTLHSAWTKIHFGVMFIGVNLTFFPQHFLGLAGMPRRYSDYPDAYALWNTVSSIGSLISLVAVIMFLFILWEAFAAKREVLSVELTMTNVEWLHGCPPPYHTYEEPAFVQIQSN</sequence>
<feature type="chain" id="PRO_0000183303" description="Cytochrome c oxidase subunit 1">
    <location>
        <begin position="1"/>
        <end position="516"/>
    </location>
</feature>
<feature type="topological domain" description="Mitochondrial matrix" evidence="2">
    <location>
        <begin position="1"/>
        <end position="11"/>
    </location>
</feature>
<feature type="transmembrane region" description="Helical; Name=I" evidence="2">
    <location>
        <begin position="12"/>
        <end position="40"/>
    </location>
</feature>
<feature type="topological domain" description="Mitochondrial intermembrane" evidence="2">
    <location>
        <begin position="41"/>
        <end position="50"/>
    </location>
</feature>
<feature type="transmembrane region" description="Helical; Name=II" evidence="2">
    <location>
        <begin position="51"/>
        <end position="86"/>
    </location>
</feature>
<feature type="topological domain" description="Mitochondrial matrix" evidence="2">
    <location>
        <begin position="87"/>
        <end position="94"/>
    </location>
</feature>
<feature type="transmembrane region" description="Helical; Name=III" evidence="2">
    <location>
        <begin position="95"/>
        <end position="117"/>
    </location>
</feature>
<feature type="topological domain" description="Mitochondrial intermembrane" evidence="2">
    <location>
        <begin position="118"/>
        <end position="140"/>
    </location>
</feature>
<feature type="transmembrane region" description="Helical; Name=IV" evidence="2">
    <location>
        <begin position="141"/>
        <end position="170"/>
    </location>
</feature>
<feature type="topological domain" description="Mitochondrial matrix" evidence="2">
    <location>
        <begin position="171"/>
        <end position="182"/>
    </location>
</feature>
<feature type="transmembrane region" description="Helical; Name=V" evidence="2">
    <location>
        <begin position="183"/>
        <end position="212"/>
    </location>
</feature>
<feature type="topological domain" description="Mitochondrial intermembrane" evidence="2">
    <location>
        <begin position="213"/>
        <end position="227"/>
    </location>
</feature>
<feature type="transmembrane region" description="Helical; Name=VI" evidence="2">
    <location>
        <begin position="228"/>
        <end position="261"/>
    </location>
</feature>
<feature type="topological domain" description="Mitochondrial matrix" evidence="2">
    <location>
        <begin position="262"/>
        <end position="269"/>
    </location>
</feature>
<feature type="transmembrane region" description="Helical; Name=VII" evidence="2">
    <location>
        <begin position="270"/>
        <end position="286"/>
    </location>
</feature>
<feature type="topological domain" description="Mitochondrial intermembrane" evidence="2">
    <location>
        <begin position="287"/>
        <end position="298"/>
    </location>
</feature>
<feature type="transmembrane region" description="Helical; Name=VIII" evidence="2">
    <location>
        <begin position="299"/>
        <end position="327"/>
    </location>
</feature>
<feature type="topological domain" description="Mitochondrial matrix" evidence="2">
    <location>
        <begin position="328"/>
        <end position="335"/>
    </location>
</feature>
<feature type="transmembrane region" description="Helical; Name=IX" evidence="2">
    <location>
        <begin position="336"/>
        <end position="357"/>
    </location>
</feature>
<feature type="topological domain" description="Mitochondrial intermembrane" evidence="2">
    <location>
        <begin position="358"/>
        <end position="370"/>
    </location>
</feature>
<feature type="transmembrane region" description="Helical; Name=X" evidence="2">
    <location>
        <begin position="371"/>
        <end position="400"/>
    </location>
</feature>
<feature type="topological domain" description="Mitochondrial matrix" evidence="2">
    <location>
        <begin position="401"/>
        <end position="406"/>
    </location>
</feature>
<feature type="transmembrane region" description="Helical; Name=XI" evidence="2">
    <location>
        <begin position="407"/>
        <end position="433"/>
    </location>
</feature>
<feature type="topological domain" description="Mitochondrial intermembrane" evidence="2">
    <location>
        <begin position="434"/>
        <end position="446"/>
    </location>
</feature>
<feature type="transmembrane region" description="Helical; Name=XII" evidence="2">
    <location>
        <begin position="447"/>
        <end position="478"/>
    </location>
</feature>
<feature type="topological domain" description="Mitochondrial matrix" evidence="2">
    <location>
        <begin position="479"/>
        <end position="516"/>
    </location>
</feature>
<feature type="binding site" evidence="2">
    <location>
        <position position="40"/>
    </location>
    <ligand>
        <name>Na(+)</name>
        <dbReference type="ChEBI" id="CHEBI:29101"/>
    </ligand>
</feature>
<feature type="binding site" evidence="2">
    <location>
        <position position="45"/>
    </location>
    <ligand>
        <name>Na(+)</name>
        <dbReference type="ChEBI" id="CHEBI:29101"/>
    </ligand>
</feature>
<feature type="binding site" description="axial binding residue" evidence="2">
    <location>
        <position position="61"/>
    </location>
    <ligand>
        <name>Fe(II)-heme a</name>
        <dbReference type="ChEBI" id="CHEBI:61715"/>
        <note>low-spin</note>
    </ligand>
    <ligandPart>
        <name>Fe</name>
        <dbReference type="ChEBI" id="CHEBI:18248"/>
    </ligandPart>
</feature>
<feature type="binding site" evidence="2">
    <location>
        <position position="240"/>
    </location>
    <ligand>
        <name>Cu cation</name>
        <dbReference type="ChEBI" id="CHEBI:23378"/>
        <label>B</label>
    </ligand>
</feature>
<feature type="binding site" evidence="2">
    <location>
        <position position="244"/>
    </location>
    <ligand>
        <name>O2</name>
        <dbReference type="ChEBI" id="CHEBI:15379"/>
    </ligand>
</feature>
<feature type="binding site" evidence="2">
    <location>
        <position position="290"/>
    </location>
    <ligand>
        <name>Cu cation</name>
        <dbReference type="ChEBI" id="CHEBI:23378"/>
        <label>B</label>
    </ligand>
</feature>
<feature type="binding site" evidence="2">
    <location>
        <position position="291"/>
    </location>
    <ligand>
        <name>Cu cation</name>
        <dbReference type="ChEBI" id="CHEBI:23378"/>
        <label>B</label>
    </ligand>
</feature>
<feature type="binding site" evidence="2">
    <location>
        <position position="368"/>
    </location>
    <ligand>
        <name>Mg(2+)</name>
        <dbReference type="ChEBI" id="CHEBI:18420"/>
        <note>ligand shared with MT-CO2</note>
    </ligand>
</feature>
<feature type="binding site" evidence="2">
    <location>
        <position position="369"/>
    </location>
    <ligand>
        <name>Mg(2+)</name>
        <dbReference type="ChEBI" id="CHEBI:18420"/>
        <note>ligand shared with MT-CO2</note>
    </ligand>
</feature>
<feature type="binding site" description="axial binding residue" evidence="2">
    <location>
        <position position="376"/>
    </location>
    <ligand>
        <name>heme a3</name>
        <dbReference type="ChEBI" id="CHEBI:83282"/>
        <note>high-spin</note>
    </ligand>
    <ligandPart>
        <name>Fe</name>
        <dbReference type="ChEBI" id="CHEBI:18248"/>
    </ligandPart>
</feature>
<feature type="binding site" description="axial binding residue" evidence="2">
    <location>
        <position position="378"/>
    </location>
    <ligand>
        <name>Fe(II)-heme a</name>
        <dbReference type="ChEBI" id="CHEBI:61715"/>
        <note>low-spin</note>
    </ligand>
    <ligandPart>
        <name>Fe</name>
        <dbReference type="ChEBI" id="CHEBI:18248"/>
    </ligandPart>
</feature>
<feature type="binding site" evidence="2">
    <location>
        <position position="441"/>
    </location>
    <ligand>
        <name>Na(+)</name>
        <dbReference type="ChEBI" id="CHEBI:29101"/>
    </ligand>
</feature>
<feature type="cross-link" description="1'-histidyl-3'-tyrosine (His-Tyr)" evidence="2">
    <location>
        <begin position="240"/>
        <end position="244"/>
    </location>
</feature>
<reference key="1">
    <citation type="journal article" date="1998" name="Zool. Sci.">
        <title>The complete sequence of mitochondrial genome from a gynogenetic triploid 'ginbuna' (Carassius auratus langsdorfi).</title>
        <authorList>
            <person name="Murakami M."/>
            <person name="Yamashita Y."/>
            <person name="Fujitani H."/>
        </authorList>
    </citation>
    <scope>NUCLEOTIDE SEQUENCE [GENOMIC DNA]</scope>
    <source>
        <strain>AZ3 / Langsdorfi</strain>
        <tissue>Oocyte</tissue>
    </source>
</reference>
<reference key="2">
    <citation type="submission" date="2000-06" db="EMBL/GenBank/DDBJ databases">
        <title>Carassius auratus cuvieri mitochondrial DNA, complete sequence.</title>
        <authorList>
            <person name="Murakami M."/>
        </authorList>
    </citation>
    <scope>NUCLEOTIDE SEQUENCE [GENOMIC DNA]</scope>
    <source>
        <strain>Cuvieri</strain>
    </source>
</reference>
<accession>O78681</accession>